<accession>Q09805</accession>
<reference key="1">
    <citation type="journal article" date="2002" name="Nature">
        <title>The genome sequence of Schizosaccharomyces pombe.</title>
        <authorList>
            <person name="Wood V."/>
            <person name="Gwilliam R."/>
            <person name="Rajandream M.A."/>
            <person name="Lyne M.H."/>
            <person name="Lyne R."/>
            <person name="Stewart A."/>
            <person name="Sgouros J.G."/>
            <person name="Peat N."/>
            <person name="Hayles J."/>
            <person name="Baker S.G."/>
            <person name="Basham D."/>
            <person name="Bowman S."/>
            <person name="Brooks K."/>
            <person name="Brown D."/>
            <person name="Brown S."/>
            <person name="Chillingworth T."/>
            <person name="Churcher C.M."/>
            <person name="Collins M."/>
            <person name="Connor R."/>
            <person name="Cronin A."/>
            <person name="Davis P."/>
            <person name="Feltwell T."/>
            <person name="Fraser A."/>
            <person name="Gentles S."/>
            <person name="Goble A."/>
            <person name="Hamlin N."/>
            <person name="Harris D.E."/>
            <person name="Hidalgo J."/>
            <person name="Hodgson G."/>
            <person name="Holroyd S."/>
            <person name="Hornsby T."/>
            <person name="Howarth S."/>
            <person name="Huckle E.J."/>
            <person name="Hunt S."/>
            <person name="Jagels K."/>
            <person name="James K.D."/>
            <person name="Jones L."/>
            <person name="Jones M."/>
            <person name="Leather S."/>
            <person name="McDonald S."/>
            <person name="McLean J."/>
            <person name="Mooney P."/>
            <person name="Moule S."/>
            <person name="Mungall K.L."/>
            <person name="Murphy L.D."/>
            <person name="Niblett D."/>
            <person name="Odell C."/>
            <person name="Oliver K."/>
            <person name="O'Neil S."/>
            <person name="Pearson D."/>
            <person name="Quail M.A."/>
            <person name="Rabbinowitsch E."/>
            <person name="Rutherford K.M."/>
            <person name="Rutter S."/>
            <person name="Saunders D."/>
            <person name="Seeger K."/>
            <person name="Sharp S."/>
            <person name="Skelton J."/>
            <person name="Simmonds M.N."/>
            <person name="Squares R."/>
            <person name="Squares S."/>
            <person name="Stevens K."/>
            <person name="Taylor K."/>
            <person name="Taylor R.G."/>
            <person name="Tivey A."/>
            <person name="Walsh S.V."/>
            <person name="Warren T."/>
            <person name="Whitehead S."/>
            <person name="Woodward J.R."/>
            <person name="Volckaert G."/>
            <person name="Aert R."/>
            <person name="Robben J."/>
            <person name="Grymonprez B."/>
            <person name="Weltjens I."/>
            <person name="Vanstreels E."/>
            <person name="Rieger M."/>
            <person name="Schaefer M."/>
            <person name="Mueller-Auer S."/>
            <person name="Gabel C."/>
            <person name="Fuchs M."/>
            <person name="Duesterhoeft A."/>
            <person name="Fritzc C."/>
            <person name="Holzer E."/>
            <person name="Moestl D."/>
            <person name="Hilbert H."/>
            <person name="Borzym K."/>
            <person name="Langer I."/>
            <person name="Beck A."/>
            <person name="Lehrach H."/>
            <person name="Reinhardt R."/>
            <person name="Pohl T.M."/>
            <person name="Eger P."/>
            <person name="Zimmermann W."/>
            <person name="Wedler H."/>
            <person name="Wambutt R."/>
            <person name="Purnelle B."/>
            <person name="Goffeau A."/>
            <person name="Cadieu E."/>
            <person name="Dreano S."/>
            <person name="Gloux S."/>
            <person name="Lelaure V."/>
            <person name="Mottier S."/>
            <person name="Galibert F."/>
            <person name="Aves S.J."/>
            <person name="Xiang Z."/>
            <person name="Hunt C."/>
            <person name="Moore K."/>
            <person name="Hurst S.M."/>
            <person name="Lucas M."/>
            <person name="Rochet M."/>
            <person name="Gaillardin C."/>
            <person name="Tallada V.A."/>
            <person name="Garzon A."/>
            <person name="Thode G."/>
            <person name="Daga R.R."/>
            <person name="Cruzado L."/>
            <person name="Jimenez J."/>
            <person name="Sanchez M."/>
            <person name="del Rey F."/>
            <person name="Benito J."/>
            <person name="Dominguez A."/>
            <person name="Revuelta J.L."/>
            <person name="Moreno S."/>
            <person name="Armstrong J."/>
            <person name="Forsburg S.L."/>
            <person name="Cerutti L."/>
            <person name="Lowe T."/>
            <person name="McCombie W.R."/>
            <person name="Paulsen I."/>
            <person name="Potashkin J."/>
            <person name="Shpakovski G.V."/>
            <person name="Ussery D."/>
            <person name="Barrell B.G."/>
            <person name="Nurse P."/>
        </authorList>
    </citation>
    <scope>NUCLEOTIDE SEQUENCE [LARGE SCALE GENOMIC DNA]</scope>
    <source>
        <strain>972 / ATCC 24843</strain>
    </source>
</reference>
<reference key="2">
    <citation type="journal article" date="2006" name="Nat. Biotechnol.">
        <title>ORFeome cloning and global analysis of protein localization in the fission yeast Schizosaccharomyces pombe.</title>
        <authorList>
            <person name="Matsuyama A."/>
            <person name="Arai R."/>
            <person name="Yashiroda Y."/>
            <person name="Shirai A."/>
            <person name="Kamata A."/>
            <person name="Sekido S."/>
            <person name="Kobayashi Y."/>
            <person name="Hashimoto A."/>
            <person name="Hamamoto M."/>
            <person name="Hiraoka Y."/>
            <person name="Horinouchi S."/>
            <person name="Yoshida M."/>
        </authorList>
    </citation>
    <scope>SUBCELLULAR LOCATION [LARGE SCALE ANALYSIS]</scope>
</reference>
<reference key="3">
    <citation type="journal article" date="2007" name="Genetics">
        <title>Valproic acid affects membrane trafficking and cell-wall integrity in fission yeast.</title>
        <authorList>
            <person name="Miyatake M."/>
            <person name="Kuno T."/>
            <person name="Kita A."/>
            <person name="Katsura K."/>
            <person name="Takegawa K."/>
            <person name="Uno S."/>
            <person name="Nabata T."/>
            <person name="Sugiura R."/>
        </authorList>
    </citation>
    <scope>FUNCTION</scope>
    <scope>DISRUPTION PHENOTYPE</scope>
</reference>
<feature type="chain" id="PRO_0000206317" description="Vacuolar protein sorting-associated protein 45">
    <location>
        <begin position="1"/>
        <end position="558"/>
    </location>
</feature>
<evidence type="ECO:0000250" key="1"/>
<evidence type="ECO:0000269" key="2">
    <source>
    </source>
</evidence>
<evidence type="ECO:0000269" key="3">
    <source>
    </source>
</evidence>
<evidence type="ECO:0000305" key="4"/>
<keyword id="KW-0963">Cytoplasm</keyword>
<keyword id="KW-0472">Membrane</keyword>
<keyword id="KW-0539">Nucleus</keyword>
<keyword id="KW-0653">Protein transport</keyword>
<keyword id="KW-1185">Reference proteome</keyword>
<keyword id="KW-0813">Transport</keyword>
<keyword id="KW-0926">Vacuole</keyword>
<name>VPS45_SCHPO</name>
<dbReference type="EMBL" id="CU329670">
    <property type="protein sequence ID" value="CAA91168.1"/>
    <property type="molecule type" value="Genomic_DNA"/>
</dbReference>
<dbReference type="PIR" id="S62458">
    <property type="entry name" value="S62458"/>
</dbReference>
<dbReference type="RefSeq" id="NP_593083.1">
    <property type="nucleotide sequence ID" value="NM_001018481.2"/>
</dbReference>
<dbReference type="SMR" id="Q09805"/>
<dbReference type="BioGRID" id="277987">
    <property type="interactions" value="1"/>
</dbReference>
<dbReference type="FunCoup" id="Q09805">
    <property type="interactions" value="445"/>
</dbReference>
<dbReference type="STRING" id="284812.Q09805"/>
<dbReference type="iPTMnet" id="Q09805"/>
<dbReference type="PaxDb" id="4896-SPAC2G11.03c.1"/>
<dbReference type="EnsemblFungi" id="SPAC2G11.03c.1">
    <property type="protein sequence ID" value="SPAC2G11.03c.1:pep"/>
    <property type="gene ID" value="SPAC2G11.03c"/>
</dbReference>
<dbReference type="GeneID" id="2541485"/>
<dbReference type="KEGG" id="spo:2541485"/>
<dbReference type="PomBase" id="SPAC2G11.03c">
    <property type="gene designation" value="vps45"/>
</dbReference>
<dbReference type="VEuPathDB" id="FungiDB:SPAC2G11.03c"/>
<dbReference type="eggNOG" id="KOG1299">
    <property type="taxonomic scope" value="Eukaryota"/>
</dbReference>
<dbReference type="HOGENOM" id="CLU_013933_3_1_1"/>
<dbReference type="InParanoid" id="Q09805"/>
<dbReference type="OMA" id="VQVTRHC"/>
<dbReference type="PhylomeDB" id="Q09805"/>
<dbReference type="Reactome" id="R-SPO-983231">
    <property type="pathway name" value="Factors involved in megakaryocyte development and platelet production"/>
</dbReference>
<dbReference type="PRO" id="PR:Q09805"/>
<dbReference type="Proteomes" id="UP000002485">
    <property type="component" value="Chromosome I"/>
</dbReference>
<dbReference type="GO" id="GO:0005829">
    <property type="term" value="C:cytosol"/>
    <property type="evidence" value="ECO:0007005"/>
    <property type="project" value="PomBase"/>
</dbReference>
<dbReference type="GO" id="GO:0005768">
    <property type="term" value="C:endosome"/>
    <property type="evidence" value="ECO:0000314"/>
    <property type="project" value="PomBase"/>
</dbReference>
<dbReference type="GO" id="GO:0000139">
    <property type="term" value="C:Golgi membrane"/>
    <property type="evidence" value="ECO:0000318"/>
    <property type="project" value="GO_Central"/>
</dbReference>
<dbReference type="GO" id="GO:0005634">
    <property type="term" value="C:nucleus"/>
    <property type="evidence" value="ECO:0007005"/>
    <property type="project" value="PomBase"/>
</dbReference>
<dbReference type="GO" id="GO:0005774">
    <property type="term" value="C:vacuolar membrane"/>
    <property type="evidence" value="ECO:0007669"/>
    <property type="project" value="UniProtKB-SubCell"/>
</dbReference>
<dbReference type="GO" id="GO:0000149">
    <property type="term" value="F:SNARE binding"/>
    <property type="evidence" value="ECO:0000255"/>
    <property type="project" value="PomBase"/>
</dbReference>
<dbReference type="GO" id="GO:0048210">
    <property type="term" value="P:Golgi vesicle fusion to target membrane"/>
    <property type="evidence" value="ECO:0000266"/>
    <property type="project" value="PomBase"/>
</dbReference>
<dbReference type="GO" id="GO:0006886">
    <property type="term" value="P:intracellular protein transport"/>
    <property type="evidence" value="ECO:0000318"/>
    <property type="project" value="GO_Central"/>
</dbReference>
<dbReference type="GO" id="GO:0016192">
    <property type="term" value="P:vesicle-mediated transport"/>
    <property type="evidence" value="ECO:0000318"/>
    <property type="project" value="GO_Central"/>
</dbReference>
<dbReference type="FunFam" id="3.90.830.10:FF:000002">
    <property type="entry name" value="Vacuolar protein sorting-associated protein 45"/>
    <property type="match status" value="1"/>
</dbReference>
<dbReference type="Gene3D" id="1.25.40.60">
    <property type="match status" value="1"/>
</dbReference>
<dbReference type="Gene3D" id="3.40.50.1910">
    <property type="match status" value="1"/>
</dbReference>
<dbReference type="Gene3D" id="3.40.50.2060">
    <property type="match status" value="1"/>
</dbReference>
<dbReference type="Gene3D" id="3.90.830.10">
    <property type="entry name" value="Syntaxin Binding Protein 1, Chain A, domain 2"/>
    <property type="match status" value="1"/>
</dbReference>
<dbReference type="InterPro" id="IPR043154">
    <property type="entry name" value="Sec-1-like_dom1"/>
</dbReference>
<dbReference type="InterPro" id="IPR043127">
    <property type="entry name" value="Sec-1-like_dom3a"/>
</dbReference>
<dbReference type="InterPro" id="IPR001619">
    <property type="entry name" value="Sec1-like"/>
</dbReference>
<dbReference type="InterPro" id="IPR027482">
    <property type="entry name" value="Sec1-like_dom2"/>
</dbReference>
<dbReference type="InterPro" id="IPR036045">
    <property type="entry name" value="Sec1-like_sf"/>
</dbReference>
<dbReference type="PANTHER" id="PTHR11679">
    <property type="entry name" value="VESICLE PROTEIN SORTING-ASSOCIATED"/>
    <property type="match status" value="1"/>
</dbReference>
<dbReference type="Pfam" id="PF00995">
    <property type="entry name" value="Sec1"/>
    <property type="match status" value="1"/>
</dbReference>
<dbReference type="PIRSF" id="PIRSF005715">
    <property type="entry name" value="VPS45_Sec1"/>
    <property type="match status" value="1"/>
</dbReference>
<dbReference type="SUPFAM" id="SSF56815">
    <property type="entry name" value="Sec1/munc18-like (SM) proteins"/>
    <property type="match status" value="1"/>
</dbReference>
<protein>
    <recommendedName>
        <fullName>Vacuolar protein sorting-associated protein 45</fullName>
    </recommendedName>
</protein>
<gene>
    <name type="primary">vps45</name>
    <name type="ORF">SPAC2G11.03c</name>
</gene>
<comment type="function">
    <text evidence="3">Vacuolar protein sorting-associated protein involved in Golgi-to-vacuole protein transport.</text>
</comment>
<comment type="subcellular location">
    <subcellularLocation>
        <location evidence="2">Cytoplasm</location>
    </subcellularLocation>
    <subcellularLocation>
        <location evidence="2">Nucleus</location>
    </subcellularLocation>
    <subcellularLocation>
        <location evidence="1">Vacuole membrane</location>
        <topology evidence="1">Peripheral membrane protein</topology>
        <orientation evidence="1">Cytoplasmic side</orientation>
    </subcellularLocation>
</comment>
<comment type="disruption phenotype">
    <text evidence="3">displays an accumulation of abnormal vesicular structures and leads to valproic acid sensitivity.</text>
</comment>
<comment type="similarity">
    <text evidence="4">Belongs to the STXBP/unc-18/SEC1 family.</text>
</comment>
<organism>
    <name type="scientific">Schizosaccharomyces pombe (strain 972 / ATCC 24843)</name>
    <name type="common">Fission yeast</name>
    <dbReference type="NCBI Taxonomy" id="284812"/>
    <lineage>
        <taxon>Eukaryota</taxon>
        <taxon>Fungi</taxon>
        <taxon>Dikarya</taxon>
        <taxon>Ascomycota</taxon>
        <taxon>Taphrinomycotina</taxon>
        <taxon>Schizosaccharomycetes</taxon>
        <taxon>Schizosaccharomycetales</taxon>
        <taxon>Schizosaccharomycetaceae</taxon>
        <taxon>Schizosaccharomyces</taxon>
    </lineage>
</organism>
<proteinExistence type="inferred from homology"/>
<sequence length="558" mass="63552">MDLVSASQSYFKRIFQEVSDLKILLLEEDTTKIVSSCITQSNLLEQQIYLTVLLGNKREKLRHLKCVAFLRPTPTTLRLLCEELRDPKYAEYHLYFTNVIPKSFLERLAESDDFEAVKSIQEFFLDYLVVNNDLASFNIPHIIEDSPDNWQDGAFHRTHQGIISLLLSLKKKPVIRYDNNSLLCLKLAEEVSYTIQHESQLFNFRKPDTAPILLLLDRKNDPITPLLTQWTYQAMVHELFGIDNGRVSFSNSTSDNEKSTEIVLNPTLDPFYKETRFDNFGDLGVKIKDYVSHLQTKSTKKASEIESIADMKQFLEAYPEYRRLSGNVSKHVSLVSEISQVVQRENLLEVGEVEQSLVCNEPQSTDFNDIQRLLFSNISENTKLRLAALYSLRFERIDPAKVSALQQMLIAGGVNPLKVSVIPTLLHVAGYSFRQGDVFPPSNLFSRARSGLKGLRGVENVYIQHNPFLKSILLDLIQGRLKETTHPFLNSETRAQTSNEKPQDIIVVIVGGATYEEAHFVSEFNATQPGVRIILAGTTILNSTAYIDDIMYMSTRIK</sequence>